<comment type="sequence caution" evidence="1">
    <conflict type="erroneous gene model prediction">
        <sequence resource="EMBL-CDS" id="AAG51648"/>
    </conflict>
</comment>
<dbReference type="EMBL" id="AC018908">
    <property type="protein sequence ID" value="AAG51648.1"/>
    <property type="status" value="ALT_SEQ"/>
    <property type="molecule type" value="Genomic_DNA"/>
</dbReference>
<dbReference type="EMBL" id="CP002684">
    <property type="protein sequence ID" value="AEE33772.1"/>
    <property type="molecule type" value="Genomic_DNA"/>
</dbReference>
<dbReference type="PIR" id="C96636">
    <property type="entry name" value="C96636"/>
</dbReference>
<dbReference type="RefSeq" id="NP_176301.2">
    <property type="nucleotide sequence ID" value="NM_104786.2"/>
</dbReference>
<dbReference type="FunCoup" id="Q9C948">
    <property type="interactions" value="11"/>
</dbReference>
<dbReference type="iPTMnet" id="Q9C948"/>
<dbReference type="PaxDb" id="3702-AT1G61060.1"/>
<dbReference type="EnsemblPlants" id="AT1G61060.1">
    <property type="protein sequence ID" value="AT1G61060.1"/>
    <property type="gene ID" value="AT1G61060"/>
</dbReference>
<dbReference type="GeneID" id="842397"/>
<dbReference type="Gramene" id="AT1G61060.1">
    <property type="protein sequence ID" value="AT1G61060.1"/>
    <property type="gene ID" value="AT1G61060"/>
</dbReference>
<dbReference type="KEGG" id="ath:AT1G61060"/>
<dbReference type="Araport" id="AT1G61060"/>
<dbReference type="TAIR" id="AT1G61060"/>
<dbReference type="HOGENOM" id="CLU_027176_8_3_1"/>
<dbReference type="InParanoid" id="Q9C948"/>
<dbReference type="OMA" id="IRRPYYN"/>
<dbReference type="PhylomeDB" id="Q9C948"/>
<dbReference type="PRO" id="PR:Q9C948"/>
<dbReference type="Proteomes" id="UP000006548">
    <property type="component" value="Chromosome 1"/>
</dbReference>
<dbReference type="ExpressionAtlas" id="Q9C948">
    <property type="expression patterns" value="baseline"/>
</dbReference>
<dbReference type="InterPro" id="IPR036047">
    <property type="entry name" value="F-box-like_dom_sf"/>
</dbReference>
<dbReference type="InterPro" id="IPR001810">
    <property type="entry name" value="F-box_dom"/>
</dbReference>
<dbReference type="PANTHER" id="PTHR31111">
    <property type="entry name" value="BNAA05G37150D PROTEIN-RELATED"/>
    <property type="match status" value="1"/>
</dbReference>
<dbReference type="PANTHER" id="PTHR31111:SF94">
    <property type="entry name" value="E3 UBIQUITIN-PROTEIN LIGASE SGIP1"/>
    <property type="match status" value="1"/>
</dbReference>
<dbReference type="Pfam" id="PF00646">
    <property type="entry name" value="F-box"/>
    <property type="match status" value="1"/>
</dbReference>
<dbReference type="SUPFAM" id="SSF81383">
    <property type="entry name" value="F-box domain"/>
    <property type="match status" value="1"/>
</dbReference>
<sequence>MNHQKSTTSGDDETDYFDAIHVDLFTAKILSKLPVKSIAQCRCVSKLWSSQIRRPYYNMLFPIMSPAPPRILFTIENAEGLFFYTSPQPRNPDENTSLVATLHHRTSGNSLLITSPPVGGLLCLEHDRKNYSRVLVISNPITGEFLALPKLRINEIKKELLYLNETYIFGYDPIDKQSKDAERHQWSKHIYQLPNRYLNKVVAAGVVGSSEIVFYRKYTREQDQFFIAYYNLESNIITRVILEVPLLFSGTCCVNAFTNYVGDVRLM</sequence>
<reference key="1">
    <citation type="journal article" date="2000" name="Nature">
        <title>Sequence and analysis of chromosome 1 of the plant Arabidopsis thaliana.</title>
        <authorList>
            <person name="Theologis A."/>
            <person name="Ecker J.R."/>
            <person name="Palm C.J."/>
            <person name="Federspiel N.A."/>
            <person name="Kaul S."/>
            <person name="White O."/>
            <person name="Alonso J."/>
            <person name="Altafi H."/>
            <person name="Araujo R."/>
            <person name="Bowman C.L."/>
            <person name="Brooks S.Y."/>
            <person name="Buehler E."/>
            <person name="Chan A."/>
            <person name="Chao Q."/>
            <person name="Chen H."/>
            <person name="Cheuk R.F."/>
            <person name="Chin C.W."/>
            <person name="Chung M.K."/>
            <person name="Conn L."/>
            <person name="Conway A.B."/>
            <person name="Conway A.R."/>
            <person name="Creasy T.H."/>
            <person name="Dewar K."/>
            <person name="Dunn P."/>
            <person name="Etgu P."/>
            <person name="Feldblyum T.V."/>
            <person name="Feng J.-D."/>
            <person name="Fong B."/>
            <person name="Fujii C.Y."/>
            <person name="Gill J.E."/>
            <person name="Goldsmith A.D."/>
            <person name="Haas B."/>
            <person name="Hansen N.F."/>
            <person name="Hughes B."/>
            <person name="Huizar L."/>
            <person name="Hunter J.L."/>
            <person name="Jenkins J."/>
            <person name="Johnson-Hopson C."/>
            <person name="Khan S."/>
            <person name="Khaykin E."/>
            <person name="Kim C.J."/>
            <person name="Koo H.L."/>
            <person name="Kremenetskaia I."/>
            <person name="Kurtz D.B."/>
            <person name="Kwan A."/>
            <person name="Lam B."/>
            <person name="Langin-Hooper S."/>
            <person name="Lee A."/>
            <person name="Lee J.M."/>
            <person name="Lenz C.A."/>
            <person name="Li J.H."/>
            <person name="Li Y.-P."/>
            <person name="Lin X."/>
            <person name="Liu S.X."/>
            <person name="Liu Z.A."/>
            <person name="Luros J.S."/>
            <person name="Maiti R."/>
            <person name="Marziali A."/>
            <person name="Militscher J."/>
            <person name="Miranda M."/>
            <person name="Nguyen M."/>
            <person name="Nierman W.C."/>
            <person name="Osborne B.I."/>
            <person name="Pai G."/>
            <person name="Peterson J."/>
            <person name="Pham P.K."/>
            <person name="Rizzo M."/>
            <person name="Rooney T."/>
            <person name="Rowley D."/>
            <person name="Sakano H."/>
            <person name="Salzberg S.L."/>
            <person name="Schwartz J.R."/>
            <person name="Shinn P."/>
            <person name="Southwick A.M."/>
            <person name="Sun H."/>
            <person name="Tallon L.J."/>
            <person name="Tambunga G."/>
            <person name="Toriumi M.J."/>
            <person name="Town C.D."/>
            <person name="Utterback T."/>
            <person name="Van Aken S."/>
            <person name="Vaysberg M."/>
            <person name="Vysotskaia V.S."/>
            <person name="Walker M."/>
            <person name="Wu D."/>
            <person name="Yu G."/>
            <person name="Fraser C.M."/>
            <person name="Venter J.C."/>
            <person name="Davis R.W."/>
        </authorList>
    </citation>
    <scope>NUCLEOTIDE SEQUENCE [LARGE SCALE GENOMIC DNA]</scope>
    <source>
        <strain>cv. Columbia</strain>
    </source>
</reference>
<reference key="2">
    <citation type="journal article" date="2017" name="Plant J.">
        <title>Araport11: a complete reannotation of the Arabidopsis thaliana reference genome.</title>
        <authorList>
            <person name="Cheng C.Y."/>
            <person name="Krishnakumar V."/>
            <person name="Chan A.P."/>
            <person name="Thibaud-Nissen F."/>
            <person name="Schobel S."/>
            <person name="Town C.D."/>
        </authorList>
    </citation>
    <scope>GENOME REANNOTATION</scope>
    <source>
        <strain>cv. Columbia</strain>
    </source>
</reference>
<gene>
    <name type="ordered locus">At1g61060</name>
    <name type="ORF">T7P1.19</name>
</gene>
<accession>Q9C948</accession>
<feature type="chain" id="PRO_0000283344" description="Putative F-box protein At1g61060">
    <location>
        <begin position="1"/>
        <end position="267"/>
    </location>
</feature>
<feature type="domain" description="F-box">
    <location>
        <begin position="15"/>
        <end position="63"/>
    </location>
</feature>
<keyword id="KW-1185">Reference proteome</keyword>
<evidence type="ECO:0000305" key="1"/>
<organism>
    <name type="scientific">Arabidopsis thaliana</name>
    <name type="common">Mouse-ear cress</name>
    <dbReference type="NCBI Taxonomy" id="3702"/>
    <lineage>
        <taxon>Eukaryota</taxon>
        <taxon>Viridiplantae</taxon>
        <taxon>Streptophyta</taxon>
        <taxon>Embryophyta</taxon>
        <taxon>Tracheophyta</taxon>
        <taxon>Spermatophyta</taxon>
        <taxon>Magnoliopsida</taxon>
        <taxon>eudicotyledons</taxon>
        <taxon>Gunneridae</taxon>
        <taxon>Pentapetalae</taxon>
        <taxon>rosids</taxon>
        <taxon>malvids</taxon>
        <taxon>Brassicales</taxon>
        <taxon>Brassicaceae</taxon>
        <taxon>Camelineae</taxon>
        <taxon>Arabidopsis</taxon>
    </lineage>
</organism>
<name>FB70_ARATH</name>
<proteinExistence type="predicted"/>
<protein>
    <recommendedName>
        <fullName>Putative F-box protein At1g61060</fullName>
    </recommendedName>
</protein>